<name>FTHS2_STRPG</name>
<accession>A2RGS2</accession>
<protein>
    <recommendedName>
        <fullName evidence="1">Formate--tetrahydrofolate ligase 2</fullName>
        <ecNumber evidence="1">6.3.4.3</ecNumber>
    </recommendedName>
    <alternativeName>
        <fullName evidence="1">Formyltetrahydrofolate synthetase 2</fullName>
        <shortName evidence="1">FHS 2</shortName>
        <shortName evidence="1">FTHFS 2</shortName>
    </alternativeName>
</protein>
<sequence length="557" mass="59089">MVLSDIEIANSVTMEPISKVADQLGIDKEALCLYGKYKAKIDARQLVALKDKPDGKLILVTAISPTPAGEGKTTTSVGLVDALSAIGKKAVIALREPSLGPVFGVKGGAAGGGHAQVVPMEDINLHFTGDFHAIGVANNLLAALIDNHIHHGNSLGIDSRRITWKRVVDMNDRQLRHIVDGLQGKVNGVPREDGYDITVASEIMAILCLSENISDLKARLEKIIIGYNFQGEPVTAKDLKAGGALAALLKDAIHPNLVQTLEHTPALIHGGPFANIAHGCNSVLATKLALKYGDYAVTEAGFGADLGAEKFIDIKCRMSGLRPAAVVLVATIRALKMHGGVPKADLATENVQAVVDGLPNLDKHLANIQDVYGLPVVVAINKFPLDTDAELQAVYDACDKRGVDVVISDVWANGGAGGRELAEKVVALAEQDNQFRFVYEEDDSIETKLTKIVTKVYGGKGIKLTPTAKRELAELERLGFGNYPICMAKTQYSFSDDAKKLGAPTDFIVTISNLKVSAGAGFIVALTGAIMTMPGLPKVPASETIDIDEEGNITGLF</sequence>
<reference key="1">
    <citation type="journal article" date="2007" name="J. Bacteriol.">
        <title>Complete genome of acute rheumatic fever-associated serotype M5 Streptococcus pyogenes strain Manfredo.</title>
        <authorList>
            <person name="Holden M.T.G."/>
            <person name="Scott A."/>
            <person name="Cherevach I."/>
            <person name="Chillingworth T."/>
            <person name="Churcher C."/>
            <person name="Cronin A."/>
            <person name="Dowd L."/>
            <person name="Feltwell T."/>
            <person name="Hamlin N."/>
            <person name="Holroyd S."/>
            <person name="Jagels K."/>
            <person name="Moule S."/>
            <person name="Mungall K."/>
            <person name="Quail M.A."/>
            <person name="Price C."/>
            <person name="Rabbinowitsch E."/>
            <person name="Sharp S."/>
            <person name="Skelton J."/>
            <person name="Whitehead S."/>
            <person name="Barrell B.G."/>
            <person name="Kehoe M."/>
            <person name="Parkhill J."/>
        </authorList>
    </citation>
    <scope>NUCLEOTIDE SEQUENCE [LARGE SCALE GENOMIC DNA]</scope>
    <source>
        <strain>Manfredo</strain>
    </source>
</reference>
<feature type="chain" id="PRO_0000293068" description="Formate--tetrahydrofolate ligase 2">
    <location>
        <begin position="1"/>
        <end position="557"/>
    </location>
</feature>
<feature type="binding site" evidence="1">
    <location>
        <begin position="66"/>
        <end position="73"/>
    </location>
    <ligand>
        <name>ATP</name>
        <dbReference type="ChEBI" id="CHEBI:30616"/>
    </ligand>
</feature>
<dbReference type="EC" id="6.3.4.3" evidence="1"/>
<dbReference type="EMBL" id="AM295007">
    <property type="protein sequence ID" value="CAM31054.1"/>
    <property type="molecule type" value="Genomic_DNA"/>
</dbReference>
<dbReference type="RefSeq" id="WP_011889210.1">
    <property type="nucleotide sequence ID" value="NC_009332.1"/>
</dbReference>
<dbReference type="SMR" id="A2RGS2"/>
<dbReference type="KEGG" id="spf:SpyM51732"/>
<dbReference type="HOGENOM" id="CLU_003601_3_3_9"/>
<dbReference type="UniPathway" id="UPA00193"/>
<dbReference type="GO" id="GO:0005524">
    <property type="term" value="F:ATP binding"/>
    <property type="evidence" value="ECO:0007669"/>
    <property type="project" value="UniProtKB-UniRule"/>
</dbReference>
<dbReference type="GO" id="GO:0004329">
    <property type="term" value="F:formate-tetrahydrofolate ligase activity"/>
    <property type="evidence" value="ECO:0007669"/>
    <property type="project" value="UniProtKB-UniRule"/>
</dbReference>
<dbReference type="GO" id="GO:0035999">
    <property type="term" value="P:tetrahydrofolate interconversion"/>
    <property type="evidence" value="ECO:0007669"/>
    <property type="project" value="UniProtKB-UniRule"/>
</dbReference>
<dbReference type="CDD" id="cd00477">
    <property type="entry name" value="FTHFS"/>
    <property type="match status" value="1"/>
</dbReference>
<dbReference type="FunFam" id="3.30.1510.10:FF:000001">
    <property type="entry name" value="Formate--tetrahydrofolate ligase"/>
    <property type="match status" value="1"/>
</dbReference>
<dbReference type="FunFam" id="3.10.410.10:FF:000001">
    <property type="entry name" value="Putative formate--tetrahydrofolate ligase"/>
    <property type="match status" value="1"/>
</dbReference>
<dbReference type="Gene3D" id="3.30.1510.10">
    <property type="entry name" value="Domain 2, N(10)-formyltetrahydrofolate synthetase"/>
    <property type="match status" value="1"/>
</dbReference>
<dbReference type="Gene3D" id="3.10.410.10">
    <property type="entry name" value="Formyltetrahydrofolate synthetase, domain 3"/>
    <property type="match status" value="1"/>
</dbReference>
<dbReference type="Gene3D" id="3.40.50.300">
    <property type="entry name" value="P-loop containing nucleotide triphosphate hydrolases"/>
    <property type="match status" value="1"/>
</dbReference>
<dbReference type="HAMAP" id="MF_01543">
    <property type="entry name" value="FTHFS"/>
    <property type="match status" value="1"/>
</dbReference>
<dbReference type="InterPro" id="IPR000559">
    <property type="entry name" value="Formate_THF_ligase"/>
</dbReference>
<dbReference type="InterPro" id="IPR020628">
    <property type="entry name" value="Formate_THF_ligase_CS"/>
</dbReference>
<dbReference type="InterPro" id="IPR027417">
    <property type="entry name" value="P-loop_NTPase"/>
</dbReference>
<dbReference type="NCBIfam" id="NF010030">
    <property type="entry name" value="PRK13505.1"/>
    <property type="match status" value="1"/>
</dbReference>
<dbReference type="Pfam" id="PF01268">
    <property type="entry name" value="FTHFS"/>
    <property type="match status" value="1"/>
</dbReference>
<dbReference type="SUPFAM" id="SSF52540">
    <property type="entry name" value="P-loop containing nucleoside triphosphate hydrolases"/>
    <property type="match status" value="1"/>
</dbReference>
<dbReference type="PROSITE" id="PS00721">
    <property type="entry name" value="FTHFS_1"/>
    <property type="match status" value="1"/>
</dbReference>
<dbReference type="PROSITE" id="PS00722">
    <property type="entry name" value="FTHFS_2"/>
    <property type="match status" value="1"/>
</dbReference>
<keyword id="KW-0067">ATP-binding</keyword>
<keyword id="KW-0436">Ligase</keyword>
<keyword id="KW-0547">Nucleotide-binding</keyword>
<keyword id="KW-0554">One-carbon metabolism</keyword>
<comment type="catalytic activity">
    <reaction evidence="1">
        <text>(6S)-5,6,7,8-tetrahydrofolate + formate + ATP = (6R)-10-formyltetrahydrofolate + ADP + phosphate</text>
        <dbReference type="Rhea" id="RHEA:20221"/>
        <dbReference type="ChEBI" id="CHEBI:15740"/>
        <dbReference type="ChEBI" id="CHEBI:30616"/>
        <dbReference type="ChEBI" id="CHEBI:43474"/>
        <dbReference type="ChEBI" id="CHEBI:57453"/>
        <dbReference type="ChEBI" id="CHEBI:195366"/>
        <dbReference type="ChEBI" id="CHEBI:456216"/>
        <dbReference type="EC" id="6.3.4.3"/>
    </reaction>
</comment>
<comment type="pathway">
    <text evidence="1">One-carbon metabolism; tetrahydrofolate interconversion.</text>
</comment>
<comment type="similarity">
    <text evidence="1">Belongs to the formate--tetrahydrofolate ligase family.</text>
</comment>
<gene>
    <name evidence="1" type="primary">fhs2</name>
    <name type="ordered locus">SpyM51732</name>
</gene>
<organism>
    <name type="scientific">Streptococcus pyogenes serotype M5 (strain Manfredo)</name>
    <dbReference type="NCBI Taxonomy" id="160491"/>
    <lineage>
        <taxon>Bacteria</taxon>
        <taxon>Bacillati</taxon>
        <taxon>Bacillota</taxon>
        <taxon>Bacilli</taxon>
        <taxon>Lactobacillales</taxon>
        <taxon>Streptococcaceae</taxon>
        <taxon>Streptococcus</taxon>
    </lineage>
</organism>
<proteinExistence type="inferred from homology"/>
<evidence type="ECO:0000255" key="1">
    <source>
        <dbReference type="HAMAP-Rule" id="MF_01543"/>
    </source>
</evidence>